<reference key="1">
    <citation type="journal article" date="2015" name="Genome Announc.">
        <title>Genome sequence of the AIDS-associated pathogen Penicillium marneffei (ATCC18224) and its near taxonomic relative Talaromyces stipitatus (ATCC10500).</title>
        <authorList>
            <person name="Nierman W.C."/>
            <person name="Fedorova-Abrams N.D."/>
            <person name="Andrianopoulos A."/>
        </authorList>
    </citation>
    <scope>NUCLEOTIDE SEQUENCE [LARGE SCALE GENOMIC DNA]</scope>
    <source>
        <strain>ATCC 10500 / CBS 375.48 / QM 6759 / NRRL 1006</strain>
    </source>
</reference>
<feature type="transit peptide" description="Mitochondrion" evidence="2">
    <location>
        <begin position="1"/>
        <end status="unknown"/>
    </location>
</feature>
<feature type="chain" id="PRO_0000405517" description="Mitochondrial zinc maintenance protein 1, mitochondrial">
    <location>
        <begin status="unknown"/>
        <end position="113"/>
    </location>
</feature>
<name>MZM1_TALSN</name>
<sequence length="113" mass="12844">MTTPSVSAISAYRQLLRATRIAFKDDYRVLLAARTEARKQFDQHKRTAVDTPMQIQHALETASILRHNIVQGARDAEKEDAKWELRIHDDIERGDNDSVKIGGKKVKIEKACS</sequence>
<protein>
    <recommendedName>
        <fullName>Mitochondrial zinc maintenance protein 1, mitochondrial</fullName>
    </recommendedName>
</protein>
<dbReference type="EMBL" id="EQ962658">
    <property type="protein sequence ID" value="EED14266.1"/>
    <property type="molecule type" value="Genomic_DNA"/>
</dbReference>
<dbReference type="RefSeq" id="XP_002486504.1">
    <property type="nucleotide sequence ID" value="XM_002486459.1"/>
</dbReference>
<dbReference type="SMR" id="B8MP27"/>
<dbReference type="FunCoup" id="B8MP27">
    <property type="interactions" value="14"/>
</dbReference>
<dbReference type="STRING" id="441959.B8MP27"/>
<dbReference type="GeneID" id="8098701"/>
<dbReference type="VEuPathDB" id="FungiDB:TSTA_104800"/>
<dbReference type="eggNOG" id="ENOG502S6EF">
    <property type="taxonomic scope" value="Eukaryota"/>
</dbReference>
<dbReference type="HOGENOM" id="CLU_147114_2_0_1"/>
<dbReference type="InParanoid" id="B8MP27"/>
<dbReference type="OMA" id="KYKLRIH"/>
<dbReference type="OrthoDB" id="529194at2759"/>
<dbReference type="PhylomeDB" id="B8MP27"/>
<dbReference type="Proteomes" id="UP000001745">
    <property type="component" value="Unassembled WGS sequence"/>
</dbReference>
<dbReference type="GO" id="GO:0005759">
    <property type="term" value="C:mitochondrial matrix"/>
    <property type="evidence" value="ECO:0007669"/>
    <property type="project" value="UniProtKB-SubCell"/>
</dbReference>
<dbReference type="GO" id="GO:0044183">
    <property type="term" value="F:protein folding chaperone"/>
    <property type="evidence" value="ECO:0007669"/>
    <property type="project" value="TreeGrafter"/>
</dbReference>
<dbReference type="GO" id="GO:0034551">
    <property type="term" value="P:mitochondrial respiratory chain complex III assembly"/>
    <property type="evidence" value="ECO:0007669"/>
    <property type="project" value="InterPro"/>
</dbReference>
<dbReference type="CDD" id="cd20267">
    <property type="entry name" value="Complex1_LYR_LYRM7"/>
    <property type="match status" value="1"/>
</dbReference>
<dbReference type="InterPro" id="IPR008011">
    <property type="entry name" value="Complex1_LYR_dom"/>
</dbReference>
<dbReference type="InterPro" id="IPR045298">
    <property type="entry name" value="Complex1_LYR_LYRM7"/>
</dbReference>
<dbReference type="InterPro" id="IPR050435">
    <property type="entry name" value="MZM1/LYRM7"/>
</dbReference>
<dbReference type="PANTHER" id="PTHR46749">
    <property type="entry name" value="COMPLEX III ASSEMBLY FACTOR LYRM7"/>
    <property type="match status" value="1"/>
</dbReference>
<dbReference type="PANTHER" id="PTHR46749:SF1">
    <property type="entry name" value="COMPLEX III ASSEMBLY FACTOR LYRM7"/>
    <property type="match status" value="1"/>
</dbReference>
<dbReference type="Pfam" id="PF05347">
    <property type="entry name" value="Complex1_LYR"/>
    <property type="match status" value="1"/>
</dbReference>
<accession>B8MP27</accession>
<proteinExistence type="inferred from homology"/>
<gene>
    <name type="primary">MZM1</name>
    <name type="ORF">TSTA_104800</name>
</gene>
<evidence type="ECO:0000250" key="1"/>
<evidence type="ECO:0000255" key="2"/>
<evidence type="ECO:0000305" key="3"/>
<keyword id="KW-0143">Chaperone</keyword>
<keyword id="KW-0496">Mitochondrion</keyword>
<keyword id="KW-1185">Reference proteome</keyword>
<keyword id="KW-0809">Transit peptide</keyword>
<organism>
    <name type="scientific">Talaromyces stipitatus (strain ATCC 10500 / CBS 375.48 / QM 6759 / NRRL 1006)</name>
    <name type="common">Penicillium stipitatum</name>
    <dbReference type="NCBI Taxonomy" id="441959"/>
    <lineage>
        <taxon>Eukaryota</taxon>
        <taxon>Fungi</taxon>
        <taxon>Dikarya</taxon>
        <taxon>Ascomycota</taxon>
        <taxon>Pezizomycotina</taxon>
        <taxon>Eurotiomycetes</taxon>
        <taxon>Eurotiomycetidae</taxon>
        <taxon>Eurotiales</taxon>
        <taxon>Trichocomaceae</taxon>
        <taxon>Talaromyces</taxon>
        <taxon>Talaromyces sect. Talaromyces</taxon>
    </lineage>
</organism>
<comment type="function">
    <text evidence="1">Assembly factor required for Rieske Fe-S protein RIP1 incorporation into the cytochrome b-c1 (CIII) complex. Functions as a chaperone, binding to this subunit within the mitochondrial matrix and stabilizing it prior to its translocation and insertion into the late CIII dimeric intermediate within the mitochondrial inner membrane. Modulates the mitochondrial matrix zinc pool (By similarity).</text>
</comment>
<comment type="subunit">
    <text evidence="1">Interacts with RIP1.</text>
</comment>
<comment type="subcellular location">
    <subcellularLocation>
        <location evidence="1">Mitochondrion matrix</location>
    </subcellularLocation>
</comment>
<comment type="similarity">
    <text evidence="3">Belongs to the complex I LYR family. MZM1 subfamily.</text>
</comment>